<organism>
    <name type="scientific">Burkholderia pseudomallei (strain K96243)</name>
    <dbReference type="NCBI Taxonomy" id="272560"/>
    <lineage>
        <taxon>Bacteria</taxon>
        <taxon>Pseudomonadati</taxon>
        <taxon>Pseudomonadota</taxon>
        <taxon>Betaproteobacteria</taxon>
        <taxon>Burkholderiales</taxon>
        <taxon>Burkholderiaceae</taxon>
        <taxon>Burkholderia</taxon>
        <taxon>pseudomallei group</taxon>
    </lineage>
</organism>
<gene>
    <name evidence="1" type="primary">selD</name>
    <name type="ordered locus">BPSS0287</name>
</gene>
<sequence length="354" mass="36078">MTETKQTDAAAPRLTSLSHGGGCGCKIAPGVLSELLRRTAPPALFPDLLVGTETSDDAAVYRLNDEQAIVATTDFFMPIVDDPFDFGRIAATNALSDVYAMGGKPILALALVGMPINVLPHETIAAVLRGGEAVCADAGIPVAGGHSIDSVEPIYGLAALGVVHPARVKRNAAARAGDVLVLGKPLGVGVLSAALKKDRLDAQGYAQMIATTTKLNRPGTALAALPGVHALTDVTGFGLLGHTLELARGAGLTARVRYGALPWLAGVEALVADGVLTGASGRNWAAYGHDVRLGDGLPAVAQALLTDPQTSGGLLVACAPEAVDDVLACFRDDGFERAAAIGEMVDGAARVDVS</sequence>
<accession>Q63NL2</accession>
<name>SELD_BURPS</name>
<dbReference type="EC" id="2.7.9.3" evidence="1"/>
<dbReference type="EMBL" id="BX571966">
    <property type="protein sequence ID" value="CAH37735.1"/>
    <property type="molecule type" value="Genomic_DNA"/>
</dbReference>
<dbReference type="RefSeq" id="WP_004551284.1">
    <property type="nucleotide sequence ID" value="NZ_CP009537.1"/>
</dbReference>
<dbReference type="RefSeq" id="YP_110307.1">
    <property type="nucleotide sequence ID" value="NC_006351.1"/>
</dbReference>
<dbReference type="SMR" id="Q63NL2"/>
<dbReference type="STRING" id="272560.BPSS0287"/>
<dbReference type="KEGG" id="bps:BPSS0287"/>
<dbReference type="PATRIC" id="fig|272560.51.peg.6386"/>
<dbReference type="eggNOG" id="COG0709">
    <property type="taxonomic scope" value="Bacteria"/>
</dbReference>
<dbReference type="Proteomes" id="UP000000605">
    <property type="component" value="Chromosome 2"/>
</dbReference>
<dbReference type="GO" id="GO:0005737">
    <property type="term" value="C:cytoplasm"/>
    <property type="evidence" value="ECO:0007669"/>
    <property type="project" value="TreeGrafter"/>
</dbReference>
<dbReference type="GO" id="GO:0005524">
    <property type="term" value="F:ATP binding"/>
    <property type="evidence" value="ECO:0007669"/>
    <property type="project" value="UniProtKB-UniRule"/>
</dbReference>
<dbReference type="GO" id="GO:0000287">
    <property type="term" value="F:magnesium ion binding"/>
    <property type="evidence" value="ECO:0007669"/>
    <property type="project" value="UniProtKB-UniRule"/>
</dbReference>
<dbReference type="GO" id="GO:0004756">
    <property type="term" value="F:selenide, water dikinase activity"/>
    <property type="evidence" value="ECO:0007669"/>
    <property type="project" value="UniProtKB-UniRule"/>
</dbReference>
<dbReference type="GO" id="GO:0016260">
    <property type="term" value="P:selenocysteine biosynthetic process"/>
    <property type="evidence" value="ECO:0007669"/>
    <property type="project" value="InterPro"/>
</dbReference>
<dbReference type="CDD" id="cd02195">
    <property type="entry name" value="SelD"/>
    <property type="match status" value="1"/>
</dbReference>
<dbReference type="FunFam" id="3.30.1330.10:FF:000003">
    <property type="entry name" value="Selenide, water dikinase"/>
    <property type="match status" value="1"/>
</dbReference>
<dbReference type="FunFam" id="3.90.650.10:FF:000004">
    <property type="entry name" value="Selenide, water dikinase"/>
    <property type="match status" value="1"/>
</dbReference>
<dbReference type="Gene3D" id="3.90.650.10">
    <property type="entry name" value="PurM-like C-terminal domain"/>
    <property type="match status" value="1"/>
</dbReference>
<dbReference type="Gene3D" id="3.30.1330.10">
    <property type="entry name" value="PurM-like, N-terminal domain"/>
    <property type="match status" value="1"/>
</dbReference>
<dbReference type="HAMAP" id="MF_00625">
    <property type="entry name" value="SelD"/>
    <property type="match status" value="1"/>
</dbReference>
<dbReference type="InterPro" id="IPR010918">
    <property type="entry name" value="PurM-like_C_dom"/>
</dbReference>
<dbReference type="InterPro" id="IPR036676">
    <property type="entry name" value="PurM-like_C_sf"/>
</dbReference>
<dbReference type="InterPro" id="IPR016188">
    <property type="entry name" value="PurM-like_N"/>
</dbReference>
<dbReference type="InterPro" id="IPR036921">
    <property type="entry name" value="PurM-like_N_sf"/>
</dbReference>
<dbReference type="InterPro" id="IPR023061">
    <property type="entry name" value="SelD_I"/>
</dbReference>
<dbReference type="InterPro" id="IPR004536">
    <property type="entry name" value="SPS/SelD"/>
</dbReference>
<dbReference type="NCBIfam" id="NF002098">
    <property type="entry name" value="PRK00943.1"/>
    <property type="match status" value="1"/>
</dbReference>
<dbReference type="NCBIfam" id="TIGR00476">
    <property type="entry name" value="selD"/>
    <property type="match status" value="1"/>
</dbReference>
<dbReference type="PANTHER" id="PTHR10256:SF0">
    <property type="entry name" value="INACTIVE SELENIDE, WATER DIKINASE-LIKE PROTEIN-RELATED"/>
    <property type="match status" value="1"/>
</dbReference>
<dbReference type="PANTHER" id="PTHR10256">
    <property type="entry name" value="SELENIDE, WATER DIKINASE"/>
    <property type="match status" value="1"/>
</dbReference>
<dbReference type="Pfam" id="PF00586">
    <property type="entry name" value="AIRS"/>
    <property type="match status" value="1"/>
</dbReference>
<dbReference type="Pfam" id="PF02769">
    <property type="entry name" value="AIRS_C"/>
    <property type="match status" value="1"/>
</dbReference>
<dbReference type="PIRSF" id="PIRSF036407">
    <property type="entry name" value="Selenphspht_syn"/>
    <property type="match status" value="1"/>
</dbReference>
<dbReference type="SUPFAM" id="SSF56042">
    <property type="entry name" value="PurM C-terminal domain-like"/>
    <property type="match status" value="1"/>
</dbReference>
<dbReference type="SUPFAM" id="SSF55326">
    <property type="entry name" value="PurM N-terminal domain-like"/>
    <property type="match status" value="1"/>
</dbReference>
<evidence type="ECO:0000255" key="1">
    <source>
        <dbReference type="HAMAP-Rule" id="MF_00625"/>
    </source>
</evidence>
<keyword id="KW-0067">ATP-binding</keyword>
<keyword id="KW-0418">Kinase</keyword>
<keyword id="KW-0460">Magnesium</keyword>
<keyword id="KW-0479">Metal-binding</keyword>
<keyword id="KW-0547">Nucleotide-binding</keyword>
<keyword id="KW-1185">Reference proteome</keyword>
<keyword id="KW-0711">Selenium</keyword>
<keyword id="KW-0808">Transferase</keyword>
<comment type="function">
    <text evidence="1">Synthesizes selenophosphate from selenide and ATP.</text>
</comment>
<comment type="catalytic activity">
    <reaction evidence="1">
        <text>hydrogenselenide + ATP + H2O = selenophosphate + AMP + phosphate + 2 H(+)</text>
        <dbReference type="Rhea" id="RHEA:18737"/>
        <dbReference type="ChEBI" id="CHEBI:15377"/>
        <dbReference type="ChEBI" id="CHEBI:15378"/>
        <dbReference type="ChEBI" id="CHEBI:16144"/>
        <dbReference type="ChEBI" id="CHEBI:29317"/>
        <dbReference type="ChEBI" id="CHEBI:30616"/>
        <dbReference type="ChEBI" id="CHEBI:43474"/>
        <dbReference type="ChEBI" id="CHEBI:456215"/>
        <dbReference type="EC" id="2.7.9.3"/>
    </reaction>
</comment>
<comment type="cofactor">
    <cofactor evidence="1">
        <name>Mg(2+)</name>
        <dbReference type="ChEBI" id="CHEBI:18420"/>
    </cofactor>
    <text evidence="1">Binds 1 Mg(2+) ion per monomer.</text>
</comment>
<comment type="subunit">
    <text evidence="1">Homodimer.</text>
</comment>
<comment type="similarity">
    <text evidence="1">Belongs to the selenophosphate synthase 1 family. Class I subfamily.</text>
</comment>
<feature type="chain" id="PRO_0000127617" description="Selenide, water dikinase">
    <location>
        <begin position="1"/>
        <end position="354"/>
    </location>
</feature>
<feature type="active site" evidence="1">
    <location>
        <position position="23"/>
    </location>
</feature>
<feature type="binding site" description="in other chain" evidence="1">
    <location>
        <position position="26"/>
    </location>
    <ligand>
        <name>ATP</name>
        <dbReference type="ChEBI" id="CHEBI:30616"/>
        <note>ligand shared between dimeric partners</note>
    </ligand>
</feature>
<feature type="binding site" description="in other chain" evidence="1">
    <location>
        <begin position="54"/>
        <end position="56"/>
    </location>
    <ligand>
        <name>ATP</name>
        <dbReference type="ChEBI" id="CHEBI:30616"/>
        <note>ligand shared between dimeric partners</note>
    </ligand>
</feature>
<feature type="binding site" evidence="1">
    <location>
        <position position="57"/>
    </location>
    <ligand>
        <name>Mg(2+)</name>
        <dbReference type="ChEBI" id="CHEBI:18420"/>
    </ligand>
</feature>
<feature type="binding site" description="in other chain" evidence="1">
    <location>
        <position position="74"/>
    </location>
    <ligand>
        <name>ATP</name>
        <dbReference type="ChEBI" id="CHEBI:30616"/>
        <note>ligand shared between dimeric partners</note>
    </ligand>
</feature>
<feature type="binding site" description="in other chain" evidence="1">
    <location>
        <position position="97"/>
    </location>
    <ligand>
        <name>ATP</name>
        <dbReference type="ChEBI" id="CHEBI:30616"/>
        <note>ligand shared between dimeric partners</note>
    </ligand>
</feature>
<feature type="binding site" evidence="1">
    <location>
        <position position="97"/>
    </location>
    <ligand>
        <name>Mg(2+)</name>
        <dbReference type="ChEBI" id="CHEBI:18420"/>
    </ligand>
</feature>
<feature type="binding site" evidence="1">
    <location>
        <begin position="145"/>
        <end position="147"/>
    </location>
    <ligand>
        <name>ATP</name>
        <dbReference type="ChEBI" id="CHEBI:30616"/>
        <note>ligand shared between dimeric partners</note>
    </ligand>
</feature>
<feature type="binding site" evidence="1">
    <location>
        <position position="233"/>
    </location>
    <ligand>
        <name>Mg(2+)</name>
        <dbReference type="ChEBI" id="CHEBI:18420"/>
    </ligand>
</feature>
<feature type="site" description="Important for catalytic activity" evidence="1">
    <location>
        <position position="26"/>
    </location>
</feature>
<proteinExistence type="inferred from homology"/>
<reference key="1">
    <citation type="journal article" date="2004" name="Proc. Natl. Acad. Sci. U.S.A.">
        <title>Genomic plasticity of the causative agent of melioidosis, Burkholderia pseudomallei.</title>
        <authorList>
            <person name="Holden M.T.G."/>
            <person name="Titball R.W."/>
            <person name="Peacock S.J."/>
            <person name="Cerdeno-Tarraga A.-M."/>
            <person name="Atkins T."/>
            <person name="Crossman L.C."/>
            <person name="Pitt T."/>
            <person name="Churcher C."/>
            <person name="Mungall K.L."/>
            <person name="Bentley S.D."/>
            <person name="Sebaihia M."/>
            <person name="Thomson N.R."/>
            <person name="Bason N."/>
            <person name="Beacham I.R."/>
            <person name="Brooks K."/>
            <person name="Brown K.A."/>
            <person name="Brown N.F."/>
            <person name="Challis G.L."/>
            <person name="Cherevach I."/>
            <person name="Chillingworth T."/>
            <person name="Cronin A."/>
            <person name="Crossett B."/>
            <person name="Davis P."/>
            <person name="DeShazer D."/>
            <person name="Feltwell T."/>
            <person name="Fraser A."/>
            <person name="Hance Z."/>
            <person name="Hauser H."/>
            <person name="Holroyd S."/>
            <person name="Jagels K."/>
            <person name="Keith K.E."/>
            <person name="Maddison M."/>
            <person name="Moule S."/>
            <person name="Price C."/>
            <person name="Quail M.A."/>
            <person name="Rabbinowitsch E."/>
            <person name="Rutherford K."/>
            <person name="Sanders M."/>
            <person name="Simmonds M."/>
            <person name="Songsivilai S."/>
            <person name="Stevens K."/>
            <person name="Tumapa S."/>
            <person name="Vesaratchavest M."/>
            <person name="Whitehead S."/>
            <person name="Yeats C."/>
            <person name="Barrell B.G."/>
            <person name="Oyston P.C.F."/>
            <person name="Parkhill J."/>
        </authorList>
    </citation>
    <scope>NUCLEOTIDE SEQUENCE [LARGE SCALE GENOMIC DNA]</scope>
    <source>
        <strain>K96243</strain>
    </source>
</reference>
<protein>
    <recommendedName>
        <fullName evidence="1">Selenide, water dikinase</fullName>
        <ecNumber evidence="1">2.7.9.3</ecNumber>
    </recommendedName>
    <alternativeName>
        <fullName evidence="1">Selenium donor protein</fullName>
    </alternativeName>
    <alternativeName>
        <fullName evidence="1">Selenophosphate synthase</fullName>
    </alternativeName>
</protein>